<sequence>MAKEKFDRSKPHLNVGTIGHVDHGKTTLTAAITTTLAKAIGGKNKAVAYDQIDNAPEEKARGITIATSHQEYETNNRHYAHVDCPGHADYVKNMITGAAQMDAAILVVSATDGPMPQTKEHILLARQVGVPYVIVFINKADMLAADERAEMIEMVEMDVRDLLNKYNFPGDTTPIVYGSAVKALEGDESEIGAPAILKLMEALDTFVPNPKRVTDKPFLMPVEDVFSITGRGTVATGRVEQGVLKVNDEVEIIGIRPTTKTVVTGIEMFRKLLDQAEAGDNIGALLRGTKKEDIERGQVLAKPGSITPHKKFAAEVYVLTKDEGGRHTPFINNYRPQFYFRTTDVTGVCNLPNGVEMVMPGDNVSLTVELISPIAMDKGLKFAIREGGRTIGSGVVVDIIE</sequence>
<gene>
    <name evidence="2" type="primary">tuf</name>
    <name type="ordered locus">LBJ_2661</name>
</gene>
<keyword id="KW-0963">Cytoplasm</keyword>
<keyword id="KW-0251">Elongation factor</keyword>
<keyword id="KW-0342">GTP-binding</keyword>
<keyword id="KW-0378">Hydrolase</keyword>
<keyword id="KW-0460">Magnesium</keyword>
<keyword id="KW-0479">Metal-binding</keyword>
<keyword id="KW-0547">Nucleotide-binding</keyword>
<keyword id="KW-0648">Protein biosynthesis</keyword>
<organism>
    <name type="scientific">Leptospira borgpetersenii serovar Hardjo-bovis (strain JB197)</name>
    <dbReference type="NCBI Taxonomy" id="355277"/>
    <lineage>
        <taxon>Bacteria</taxon>
        <taxon>Pseudomonadati</taxon>
        <taxon>Spirochaetota</taxon>
        <taxon>Spirochaetia</taxon>
        <taxon>Leptospirales</taxon>
        <taxon>Leptospiraceae</taxon>
        <taxon>Leptospira</taxon>
    </lineage>
</organism>
<comment type="function">
    <text evidence="2">GTP hydrolase that promotes the GTP-dependent binding of aminoacyl-tRNA to the A-site of ribosomes during protein biosynthesis.</text>
</comment>
<comment type="catalytic activity">
    <reaction evidence="2">
        <text>GTP + H2O = GDP + phosphate + H(+)</text>
        <dbReference type="Rhea" id="RHEA:19669"/>
        <dbReference type="ChEBI" id="CHEBI:15377"/>
        <dbReference type="ChEBI" id="CHEBI:15378"/>
        <dbReference type="ChEBI" id="CHEBI:37565"/>
        <dbReference type="ChEBI" id="CHEBI:43474"/>
        <dbReference type="ChEBI" id="CHEBI:58189"/>
        <dbReference type="EC" id="3.6.5.3"/>
    </reaction>
    <physiologicalReaction direction="left-to-right" evidence="2">
        <dbReference type="Rhea" id="RHEA:19670"/>
    </physiologicalReaction>
</comment>
<comment type="subunit">
    <text evidence="2">Monomer.</text>
</comment>
<comment type="subcellular location">
    <subcellularLocation>
        <location evidence="2">Cytoplasm</location>
    </subcellularLocation>
</comment>
<comment type="similarity">
    <text evidence="2">Belongs to the TRAFAC class translation factor GTPase superfamily. Classic translation factor GTPase family. EF-Tu/EF-1A subfamily.</text>
</comment>
<reference key="1">
    <citation type="journal article" date="2006" name="Proc. Natl. Acad. Sci. U.S.A.">
        <title>Genome reduction in Leptospira borgpetersenii reflects limited transmission potential.</title>
        <authorList>
            <person name="Bulach D.M."/>
            <person name="Zuerner R.L."/>
            <person name="Wilson P."/>
            <person name="Seemann T."/>
            <person name="McGrath A."/>
            <person name="Cullen P.A."/>
            <person name="Davis J."/>
            <person name="Johnson M."/>
            <person name="Kuczek E."/>
            <person name="Alt D.P."/>
            <person name="Peterson-Burch B."/>
            <person name="Coppel R.L."/>
            <person name="Rood J.I."/>
            <person name="Davies J.K."/>
            <person name="Adler B."/>
        </authorList>
    </citation>
    <scope>NUCLEOTIDE SEQUENCE [LARGE SCALE GENOMIC DNA]</scope>
    <source>
        <strain>JB197</strain>
    </source>
</reference>
<protein>
    <recommendedName>
        <fullName evidence="2">Elongation factor Tu</fullName>
        <shortName evidence="2">EF-Tu</shortName>
        <ecNumber evidence="2">3.6.5.3</ecNumber>
    </recommendedName>
</protein>
<name>EFTU_LEPBJ</name>
<proteinExistence type="inferred from homology"/>
<accession>Q04PT6</accession>
<evidence type="ECO:0000250" key="1"/>
<evidence type="ECO:0000255" key="2">
    <source>
        <dbReference type="HAMAP-Rule" id="MF_00118"/>
    </source>
</evidence>
<feature type="chain" id="PRO_1000015680" description="Elongation factor Tu">
    <location>
        <begin position="1"/>
        <end position="401"/>
    </location>
</feature>
<feature type="domain" description="tr-type G">
    <location>
        <begin position="10"/>
        <end position="211"/>
    </location>
</feature>
<feature type="region of interest" description="G1" evidence="1">
    <location>
        <begin position="19"/>
        <end position="26"/>
    </location>
</feature>
<feature type="region of interest" description="G2" evidence="1">
    <location>
        <begin position="62"/>
        <end position="66"/>
    </location>
</feature>
<feature type="region of interest" description="G3" evidence="1">
    <location>
        <begin position="83"/>
        <end position="86"/>
    </location>
</feature>
<feature type="region of interest" description="G4" evidence="1">
    <location>
        <begin position="138"/>
        <end position="141"/>
    </location>
</feature>
<feature type="region of interest" description="G5" evidence="1">
    <location>
        <begin position="179"/>
        <end position="181"/>
    </location>
</feature>
<feature type="binding site" evidence="2">
    <location>
        <begin position="19"/>
        <end position="26"/>
    </location>
    <ligand>
        <name>GTP</name>
        <dbReference type="ChEBI" id="CHEBI:37565"/>
    </ligand>
</feature>
<feature type="binding site" evidence="2">
    <location>
        <position position="26"/>
    </location>
    <ligand>
        <name>Mg(2+)</name>
        <dbReference type="ChEBI" id="CHEBI:18420"/>
    </ligand>
</feature>
<feature type="binding site" evidence="2">
    <location>
        <begin position="83"/>
        <end position="87"/>
    </location>
    <ligand>
        <name>GTP</name>
        <dbReference type="ChEBI" id="CHEBI:37565"/>
    </ligand>
</feature>
<feature type="binding site" evidence="2">
    <location>
        <begin position="138"/>
        <end position="141"/>
    </location>
    <ligand>
        <name>GTP</name>
        <dbReference type="ChEBI" id="CHEBI:37565"/>
    </ligand>
</feature>
<dbReference type="EC" id="3.6.5.3" evidence="2"/>
<dbReference type="EMBL" id="CP000350">
    <property type="protein sequence ID" value="ABJ77084.1"/>
    <property type="molecule type" value="Genomic_DNA"/>
</dbReference>
<dbReference type="RefSeq" id="WP_011669431.1">
    <property type="nucleotide sequence ID" value="NC_008510.1"/>
</dbReference>
<dbReference type="SMR" id="Q04PT6"/>
<dbReference type="KEGG" id="lbj:LBJ_2661"/>
<dbReference type="HOGENOM" id="CLU_007265_0_2_12"/>
<dbReference type="Proteomes" id="UP000000656">
    <property type="component" value="Chromosome 1"/>
</dbReference>
<dbReference type="GO" id="GO:0005829">
    <property type="term" value="C:cytosol"/>
    <property type="evidence" value="ECO:0007669"/>
    <property type="project" value="TreeGrafter"/>
</dbReference>
<dbReference type="GO" id="GO:0005525">
    <property type="term" value="F:GTP binding"/>
    <property type="evidence" value="ECO:0007669"/>
    <property type="project" value="UniProtKB-UniRule"/>
</dbReference>
<dbReference type="GO" id="GO:0003924">
    <property type="term" value="F:GTPase activity"/>
    <property type="evidence" value="ECO:0007669"/>
    <property type="project" value="InterPro"/>
</dbReference>
<dbReference type="GO" id="GO:0003746">
    <property type="term" value="F:translation elongation factor activity"/>
    <property type="evidence" value="ECO:0007669"/>
    <property type="project" value="UniProtKB-UniRule"/>
</dbReference>
<dbReference type="CDD" id="cd01884">
    <property type="entry name" value="EF_Tu"/>
    <property type="match status" value="1"/>
</dbReference>
<dbReference type="CDD" id="cd03697">
    <property type="entry name" value="EFTU_II"/>
    <property type="match status" value="1"/>
</dbReference>
<dbReference type="CDD" id="cd03707">
    <property type="entry name" value="EFTU_III"/>
    <property type="match status" value="1"/>
</dbReference>
<dbReference type="FunFam" id="2.40.30.10:FF:000001">
    <property type="entry name" value="Elongation factor Tu"/>
    <property type="match status" value="1"/>
</dbReference>
<dbReference type="FunFam" id="3.40.50.300:FF:000003">
    <property type="entry name" value="Elongation factor Tu"/>
    <property type="match status" value="1"/>
</dbReference>
<dbReference type="Gene3D" id="3.40.50.300">
    <property type="entry name" value="P-loop containing nucleotide triphosphate hydrolases"/>
    <property type="match status" value="1"/>
</dbReference>
<dbReference type="Gene3D" id="2.40.30.10">
    <property type="entry name" value="Translation factors"/>
    <property type="match status" value="2"/>
</dbReference>
<dbReference type="HAMAP" id="MF_00118_B">
    <property type="entry name" value="EF_Tu_B"/>
    <property type="match status" value="1"/>
</dbReference>
<dbReference type="InterPro" id="IPR041709">
    <property type="entry name" value="EF-Tu_GTP-bd"/>
</dbReference>
<dbReference type="InterPro" id="IPR050055">
    <property type="entry name" value="EF-Tu_GTPase"/>
</dbReference>
<dbReference type="InterPro" id="IPR004161">
    <property type="entry name" value="EFTu-like_2"/>
</dbReference>
<dbReference type="InterPro" id="IPR033720">
    <property type="entry name" value="EFTU_2"/>
</dbReference>
<dbReference type="InterPro" id="IPR031157">
    <property type="entry name" value="G_TR_CS"/>
</dbReference>
<dbReference type="InterPro" id="IPR027417">
    <property type="entry name" value="P-loop_NTPase"/>
</dbReference>
<dbReference type="InterPro" id="IPR005225">
    <property type="entry name" value="Small_GTP-bd"/>
</dbReference>
<dbReference type="InterPro" id="IPR000795">
    <property type="entry name" value="T_Tr_GTP-bd_dom"/>
</dbReference>
<dbReference type="InterPro" id="IPR009000">
    <property type="entry name" value="Transl_B-barrel_sf"/>
</dbReference>
<dbReference type="InterPro" id="IPR009001">
    <property type="entry name" value="Transl_elong_EF1A/Init_IF2_C"/>
</dbReference>
<dbReference type="InterPro" id="IPR004541">
    <property type="entry name" value="Transl_elong_EFTu/EF1A_bac/org"/>
</dbReference>
<dbReference type="InterPro" id="IPR004160">
    <property type="entry name" value="Transl_elong_EFTu/EF1A_C"/>
</dbReference>
<dbReference type="NCBIfam" id="TIGR00485">
    <property type="entry name" value="EF-Tu"/>
    <property type="match status" value="1"/>
</dbReference>
<dbReference type="NCBIfam" id="NF000766">
    <property type="entry name" value="PRK00049.1"/>
    <property type="match status" value="1"/>
</dbReference>
<dbReference type="NCBIfam" id="NF009372">
    <property type="entry name" value="PRK12735.1"/>
    <property type="match status" value="1"/>
</dbReference>
<dbReference type="NCBIfam" id="NF009373">
    <property type="entry name" value="PRK12736.1"/>
    <property type="match status" value="1"/>
</dbReference>
<dbReference type="NCBIfam" id="TIGR00231">
    <property type="entry name" value="small_GTP"/>
    <property type="match status" value="1"/>
</dbReference>
<dbReference type="PANTHER" id="PTHR43721:SF22">
    <property type="entry name" value="ELONGATION FACTOR TU, MITOCHONDRIAL"/>
    <property type="match status" value="1"/>
</dbReference>
<dbReference type="PANTHER" id="PTHR43721">
    <property type="entry name" value="ELONGATION FACTOR TU-RELATED"/>
    <property type="match status" value="1"/>
</dbReference>
<dbReference type="Pfam" id="PF00009">
    <property type="entry name" value="GTP_EFTU"/>
    <property type="match status" value="1"/>
</dbReference>
<dbReference type="Pfam" id="PF03144">
    <property type="entry name" value="GTP_EFTU_D2"/>
    <property type="match status" value="1"/>
</dbReference>
<dbReference type="Pfam" id="PF03143">
    <property type="entry name" value="GTP_EFTU_D3"/>
    <property type="match status" value="1"/>
</dbReference>
<dbReference type="PRINTS" id="PR00315">
    <property type="entry name" value="ELONGATNFCT"/>
</dbReference>
<dbReference type="SUPFAM" id="SSF50465">
    <property type="entry name" value="EF-Tu/eEF-1alpha/eIF2-gamma C-terminal domain"/>
    <property type="match status" value="1"/>
</dbReference>
<dbReference type="SUPFAM" id="SSF52540">
    <property type="entry name" value="P-loop containing nucleoside triphosphate hydrolases"/>
    <property type="match status" value="1"/>
</dbReference>
<dbReference type="SUPFAM" id="SSF50447">
    <property type="entry name" value="Translation proteins"/>
    <property type="match status" value="1"/>
</dbReference>
<dbReference type="PROSITE" id="PS00301">
    <property type="entry name" value="G_TR_1"/>
    <property type="match status" value="1"/>
</dbReference>
<dbReference type="PROSITE" id="PS51722">
    <property type="entry name" value="G_TR_2"/>
    <property type="match status" value="1"/>
</dbReference>